<sequence>MNYLLISSKKDPASQNIKRHLENYGYFVHELEKKSNTSKKSDFHDSSLYVFLSKHRSESKKPTLTVHTPGNLTKDNSHGGNPEEICHCNPVFNTLLLQNIDKYNSMEEYQELGFEVSFEVLHHGPTDLNAPSAFVEIGSSEMQWQINDAAEIITNALIDTINAISYGDFEEKEKIIGLGGGHYSPKFTKLALKNEYHVGYLTPKHAKLSENILNQLITKQSFDFVTIDWKGLYGEDKKIYIEFFEKFEIPWKRV</sequence>
<protein>
    <recommendedName>
        <fullName evidence="1">D-aminoacyl-tRNA deacylase</fullName>
        <ecNumber evidence="1">3.1.1.96</ecNumber>
    </recommendedName>
    <alternativeName>
        <fullName>D-tyrosyl-tRNA(Tyr) deacylase</fullName>
    </alternativeName>
</protein>
<comment type="function">
    <text evidence="1">D-aminoacyl-tRNA deacylase with broad substrate specificity. By recycling D-aminoacyl-tRNA to D-amino acids and free tRNA molecules, this enzyme counteracts the toxicity associated with the formation of D-aminoacyl-tRNA entities in vivo.</text>
</comment>
<comment type="catalytic activity">
    <reaction evidence="1">
        <text>a D-aminoacyl-tRNA + H2O = a tRNA + a D-alpha-amino acid + H(+)</text>
        <dbReference type="Rhea" id="RHEA:13953"/>
        <dbReference type="Rhea" id="RHEA-COMP:10123"/>
        <dbReference type="Rhea" id="RHEA-COMP:10124"/>
        <dbReference type="ChEBI" id="CHEBI:15377"/>
        <dbReference type="ChEBI" id="CHEBI:15378"/>
        <dbReference type="ChEBI" id="CHEBI:59871"/>
        <dbReference type="ChEBI" id="CHEBI:78442"/>
        <dbReference type="ChEBI" id="CHEBI:79333"/>
        <dbReference type="EC" id="3.1.1.96"/>
    </reaction>
</comment>
<comment type="catalytic activity">
    <reaction evidence="1">
        <text>glycyl-tRNA(Ala) + H2O = tRNA(Ala) + glycine + H(+)</text>
        <dbReference type="Rhea" id="RHEA:53744"/>
        <dbReference type="Rhea" id="RHEA-COMP:9657"/>
        <dbReference type="Rhea" id="RHEA-COMP:13640"/>
        <dbReference type="ChEBI" id="CHEBI:15377"/>
        <dbReference type="ChEBI" id="CHEBI:15378"/>
        <dbReference type="ChEBI" id="CHEBI:57305"/>
        <dbReference type="ChEBI" id="CHEBI:78442"/>
        <dbReference type="ChEBI" id="CHEBI:78522"/>
        <dbReference type="EC" id="3.1.1.96"/>
    </reaction>
</comment>
<comment type="cofactor">
    <cofactor evidence="1">
        <name>Zn(2+)</name>
        <dbReference type="ChEBI" id="CHEBI:29105"/>
    </cofactor>
    <text evidence="1">Binds 2 Zn(2+) ions per subunit.</text>
</comment>
<comment type="subunit">
    <text evidence="1">Monomer.</text>
</comment>
<comment type="similarity">
    <text evidence="1">Belongs to the DtdA deacylase family.</text>
</comment>
<reference key="1">
    <citation type="submission" date="2007-06" db="EMBL/GenBank/DDBJ databases">
        <title>Complete sequence of Methanococcus vannielii SB.</title>
        <authorList>
            <consortium name="US DOE Joint Genome Institute"/>
            <person name="Copeland A."/>
            <person name="Lucas S."/>
            <person name="Lapidus A."/>
            <person name="Barry K."/>
            <person name="Glavina del Rio T."/>
            <person name="Dalin E."/>
            <person name="Tice H."/>
            <person name="Pitluck S."/>
            <person name="Chain P."/>
            <person name="Malfatti S."/>
            <person name="Shin M."/>
            <person name="Vergez L."/>
            <person name="Schmutz J."/>
            <person name="Larimer F."/>
            <person name="Land M."/>
            <person name="Hauser L."/>
            <person name="Kyrpides N."/>
            <person name="Anderson I."/>
            <person name="Sieprawska-Lupa M."/>
            <person name="Whitman W.B."/>
            <person name="Richardson P."/>
        </authorList>
    </citation>
    <scope>NUCLEOTIDE SEQUENCE [LARGE SCALE GENOMIC DNA]</scope>
    <source>
        <strain>ATCC 35089 / DSM 1224 / JCM 13029 / OCM 148 / SB</strain>
    </source>
</reference>
<feature type="chain" id="PRO_1000024709" description="D-aminoacyl-tRNA deacylase">
    <location>
        <begin position="1"/>
        <end position="254"/>
    </location>
</feature>
<proteinExistence type="inferred from homology"/>
<accession>A6UP03</accession>
<evidence type="ECO:0000255" key="1">
    <source>
        <dbReference type="HAMAP-Rule" id="MF_00562"/>
    </source>
</evidence>
<dbReference type="EC" id="3.1.1.96" evidence="1"/>
<dbReference type="EMBL" id="CP000742">
    <property type="protein sequence ID" value="ABR54225.1"/>
    <property type="molecule type" value="Genomic_DNA"/>
</dbReference>
<dbReference type="RefSeq" id="WP_011972128.1">
    <property type="nucleotide sequence ID" value="NC_009634.1"/>
</dbReference>
<dbReference type="SMR" id="A6UP03"/>
<dbReference type="STRING" id="406327.Mevan_0316"/>
<dbReference type="GeneID" id="5326028"/>
<dbReference type="KEGG" id="mvn:Mevan_0316"/>
<dbReference type="eggNOG" id="arCOG01616">
    <property type="taxonomic scope" value="Archaea"/>
</dbReference>
<dbReference type="HOGENOM" id="CLU_056464_1_0_2"/>
<dbReference type="OrthoDB" id="9863at2157"/>
<dbReference type="Proteomes" id="UP000001107">
    <property type="component" value="Chromosome"/>
</dbReference>
<dbReference type="GO" id="GO:0051499">
    <property type="term" value="F:D-aminoacyl-tRNA deacylase activity"/>
    <property type="evidence" value="ECO:0007669"/>
    <property type="project" value="UniProtKB-UniRule"/>
</dbReference>
<dbReference type="GO" id="GO:0008270">
    <property type="term" value="F:zinc ion binding"/>
    <property type="evidence" value="ECO:0007669"/>
    <property type="project" value="UniProtKB-UniRule"/>
</dbReference>
<dbReference type="GO" id="GO:0019478">
    <property type="term" value="P:D-amino acid catabolic process"/>
    <property type="evidence" value="ECO:0007669"/>
    <property type="project" value="UniProtKB-UniRule"/>
</dbReference>
<dbReference type="Gene3D" id="3.40.50.10700">
    <property type="entry name" value="AF0625-like"/>
    <property type="match status" value="1"/>
</dbReference>
<dbReference type="Gene3D" id="3.40.630.50">
    <property type="entry name" value="AF0625-like"/>
    <property type="match status" value="1"/>
</dbReference>
<dbReference type="HAMAP" id="MF_00562">
    <property type="entry name" value="Deacylase_DtdA"/>
    <property type="match status" value="1"/>
</dbReference>
<dbReference type="InterPro" id="IPR018033">
    <property type="entry name" value="Deacylase_DtdA_archaea"/>
</dbReference>
<dbReference type="InterPro" id="IPR007508">
    <property type="entry name" value="DtdA"/>
</dbReference>
<dbReference type="NCBIfam" id="NF003071">
    <property type="entry name" value="PRK03995.1-3"/>
    <property type="match status" value="1"/>
</dbReference>
<dbReference type="PANTHER" id="PTHR34667">
    <property type="entry name" value="D-AMINOACYL-TRNA DEACYLASE"/>
    <property type="match status" value="1"/>
</dbReference>
<dbReference type="PANTHER" id="PTHR34667:SF1">
    <property type="entry name" value="D-AMINOACYL-TRNA DEACYLASE"/>
    <property type="match status" value="1"/>
</dbReference>
<dbReference type="Pfam" id="PF04414">
    <property type="entry name" value="tRNA_deacylase"/>
    <property type="match status" value="1"/>
</dbReference>
<dbReference type="PIRSF" id="PIRSF016210">
    <property type="entry name" value="UCP016210"/>
    <property type="match status" value="1"/>
</dbReference>
<dbReference type="SUPFAM" id="SSF142535">
    <property type="entry name" value="AF0625-like"/>
    <property type="match status" value="1"/>
</dbReference>
<organism>
    <name type="scientific">Methanococcus vannielii (strain ATCC 35089 / DSM 1224 / JCM 13029 / OCM 148 / SB)</name>
    <dbReference type="NCBI Taxonomy" id="406327"/>
    <lineage>
        <taxon>Archaea</taxon>
        <taxon>Methanobacteriati</taxon>
        <taxon>Methanobacteriota</taxon>
        <taxon>Methanomada group</taxon>
        <taxon>Methanococci</taxon>
        <taxon>Methanococcales</taxon>
        <taxon>Methanococcaceae</taxon>
        <taxon>Methanococcus</taxon>
    </lineage>
</organism>
<name>DTDA_METVS</name>
<gene>
    <name evidence="1" type="primary">dtdA</name>
    <name type="ordered locus">Mevan_0316</name>
</gene>
<keyword id="KW-0378">Hydrolase</keyword>
<keyword id="KW-0479">Metal-binding</keyword>
<keyword id="KW-0862">Zinc</keyword>